<gene>
    <name type="primary">Fyco1</name>
</gene>
<proteinExistence type="evidence at protein level"/>
<comment type="function">
    <text evidence="1">May mediate microtubule plus end-directed vesicle transport.</text>
</comment>
<comment type="subunit">
    <text evidence="1">Can form homodimers. Interacts (via C-terminus) with MAP1LC3B. Interacts with RAB7A; the interaction with RAB7A induces FYCO1 recruitment to late endosomal/lysosomal compartments.</text>
</comment>
<comment type="subcellular location">
    <subcellularLocation>
        <location evidence="1">Cytoplasmic vesicle</location>
        <location evidence="1">Autophagosome</location>
    </subcellularLocation>
    <subcellularLocation>
        <location evidence="1">Endosome</location>
    </subcellularLocation>
    <subcellularLocation>
        <location evidence="1">Lysosome</location>
    </subcellularLocation>
    <text evidence="1">Localizes to the external but not to the internal membrane of autophagosomes, and upon autophagosome/late endosome/lysosome fusion, it stays on the external surface of autolysosomes.</text>
</comment>
<comment type="tissue specificity">
    <text evidence="8 9">Expressed in heart and testis. Expressed in the eye lens.</text>
</comment>
<comment type="sequence caution" evidence="10">
    <conflict type="miscellaneous discrepancy">
        <sequence resource="EMBL-CDS" id="AAH53712"/>
    </conflict>
    <text>Contaminating sequence. Potential poly-A sequence.</text>
</comment>
<keyword id="KW-0002">3D-structure</keyword>
<keyword id="KW-0007">Acetylation</keyword>
<keyword id="KW-0175">Coiled coil</keyword>
<keyword id="KW-0968">Cytoplasmic vesicle</keyword>
<keyword id="KW-0967">Endosome</keyword>
<keyword id="KW-0458">Lysosome</keyword>
<keyword id="KW-0479">Metal-binding</keyword>
<keyword id="KW-0597">Phosphoprotein</keyword>
<keyword id="KW-1185">Reference proteome</keyword>
<keyword id="KW-0862">Zinc</keyword>
<keyword id="KW-0863">Zinc-finger</keyword>
<sequence>MASSSTETQLQRIIRDLQDAATELSHEFKEGGEPITDDSTSLHKFSYKLEYLLQFDQKEKASLLGSKKDYWDYFCACLAKVKGANDGIRFVRSISELRTSLGKGRAFIRYSLVHQRLADTLQQCFMNTKVTSDWYYARSPFLKPKLSSDIVGQLYELTEVQFDLAPRGYDLDAAWPTFARRTLATSTSAYMWKPPSRSSSMSSLVSNYLQTQEMASSLDLNCSLNNEALESFDEMRLELDQLEVREKQLQERVQQLDRENQALRMLVSRQGGQLQVEKEMGYLAVEDSIGLVSLVAELQKQGDVSQATVKKLQSCLQALELNVDKKEYSPSALQLENMAKELDTVRGSLGRENQLLASLSERLARAEKGEKTPPDTELHQEPVPADLVLKFQELKGKLQALEGENTEAQELNRQQSIKLEQLAKELQLKEEARASLAHLVKDVVPLQEELSGKKQESAQLRRQLQESLAHLSSVEEELAEARQQEKQHREEKQLLEQEATSLTWQLQLLETQLGQVSQLVSDLEEQKKQLMQERDHLSQRVGTLEQLAEVHGPPQSAEMPEKRQQCLREEQVNNSTVSEAEQEELQKELQNMVDRNQLLEGKLQALQTDYKALQQREAAIQGSLASLEAEQASIRHLGNQMEASLLAVKKAKETMKAQVAEKEAALQSKESECQRLQEEADQCRLQAEAQAQELRALENQCQQQIQLIEVLSAEKGQQGLSLPQVNTDQLALSQAQLEIHQGEAQRLQNEVVDLQAKLQVALGDRDKLQSQLGVAETVLREHKTLVQQLKEQNEALNRAHVQELLQCSEREGILQEESIYKAQKQEQELRALQAELSQVRCSSEGAHLEHAELQDQLHRANTDTAELGIQVCALTAEKDRMEEALASLAQELQDSKEAALQERKGLELQVMQLQQEKEKLQEKVKAAEEAASSFSGLQAQLAQAEQLAQSLQETAHQEQDALKFQLSAEIMDHQNRLKTANEECGHLRAQLEEQGQQLQMTKEAVQELEITKAAMEEKLNCTSSHLAECQATLLRKDEESTMLQTSLERTQKELEKATSKIQEYYNKLCQEVTNRERNDQKMLADLDDLNRTKKYLEERLIELLRDKDALWQKSDALEFQQKLSAEEKCLGDMEVNHCHDCKREFSWIVRRHHCRICGRIFCYYCCNNYVVTKPSGKKERCCRACFQKFGEGSGSNDSSGSGTSQGEPSPMVSPAEASPQSIGSQGINSVCRPPDDAVFDIITDEELCQIQESGSSLPETPTETDSMDPNTAEQDTTSNSLTPEDTEDVPMGQDAEICLLKSGELMIKLPLTVEEVASFGEGSRELFVRSSTYSLITITVAEPGLTISWVFSSDPKSISFSVVFQETEDTPLDQCKVLIPTTRCNSHKENIRGQLKVRIPGIYLLIFDNTFSRFISKKVLYHLTVDRPVIYDGSDFP</sequence>
<dbReference type="EMBL" id="AJ428065">
    <property type="protein sequence ID" value="CAD20987.1"/>
    <property type="molecule type" value="mRNA"/>
</dbReference>
<dbReference type="EMBL" id="BC053712">
    <property type="protein sequence ID" value="AAH53712.1"/>
    <property type="status" value="ALT_SEQ"/>
    <property type="molecule type" value="mRNA"/>
</dbReference>
<dbReference type="EMBL" id="AK081259">
    <property type="protein sequence ID" value="BAC38178.2"/>
    <property type="molecule type" value="mRNA"/>
</dbReference>
<dbReference type="EMBL" id="AK044587">
    <property type="protein sequence ID" value="BAE43322.1"/>
    <property type="molecule type" value="mRNA"/>
</dbReference>
<dbReference type="CCDS" id="CCDS40819.1"/>
<dbReference type="RefSeq" id="NP_001103723.2">
    <property type="nucleotide sequence ID" value="NM_001110253.3"/>
</dbReference>
<dbReference type="RefSeq" id="NP_683727.3">
    <property type="nucleotide sequence ID" value="NM_148925.4"/>
</dbReference>
<dbReference type="RefSeq" id="XP_017168648.1">
    <property type="nucleotide sequence ID" value="XM_017313159.3"/>
</dbReference>
<dbReference type="RefSeq" id="XP_030099937.1">
    <property type="nucleotide sequence ID" value="XM_030244077.2"/>
</dbReference>
<dbReference type="RefSeq" id="XP_036010528.1">
    <property type="nucleotide sequence ID" value="XM_036154635.1"/>
</dbReference>
<dbReference type="PDB" id="5WRD">
    <property type="method" value="X-ray"/>
    <property type="resolution" value="1.90 A"/>
    <property type="chains" value="C/D=1235-1253"/>
</dbReference>
<dbReference type="PDBsum" id="5WRD"/>
<dbReference type="SMR" id="Q8VDC1"/>
<dbReference type="BioGRID" id="201392">
    <property type="interactions" value="10"/>
</dbReference>
<dbReference type="FunCoup" id="Q8VDC1">
    <property type="interactions" value="2758"/>
</dbReference>
<dbReference type="IntAct" id="Q8VDC1">
    <property type="interactions" value="5"/>
</dbReference>
<dbReference type="STRING" id="10090.ENSMUSP00000081764"/>
<dbReference type="GlyGen" id="Q8VDC1">
    <property type="glycosylation" value="2 sites, 1 O-linked glycan (2 sites)"/>
</dbReference>
<dbReference type="iPTMnet" id="Q8VDC1"/>
<dbReference type="PhosphoSitePlus" id="Q8VDC1"/>
<dbReference type="SwissPalm" id="Q8VDC1"/>
<dbReference type="jPOST" id="Q8VDC1"/>
<dbReference type="PaxDb" id="10090-ENSMUSP00000081764"/>
<dbReference type="PeptideAtlas" id="Q8VDC1"/>
<dbReference type="ProteomicsDB" id="267548"/>
<dbReference type="Pumba" id="Q8VDC1"/>
<dbReference type="Antibodypedia" id="29634">
    <property type="antibodies" value="152 antibodies from 25 providers"/>
</dbReference>
<dbReference type="DNASU" id="17281"/>
<dbReference type="Ensembl" id="ENSMUST00000084715.14">
    <property type="protein sequence ID" value="ENSMUSP00000081764.6"/>
    <property type="gene ID" value="ENSMUSG00000025241.17"/>
</dbReference>
<dbReference type="Ensembl" id="ENSMUST00000167595.9">
    <property type="protein sequence ID" value="ENSMUSP00000133222.3"/>
    <property type="gene ID" value="ENSMUSG00000025241.17"/>
</dbReference>
<dbReference type="GeneID" id="17281"/>
<dbReference type="KEGG" id="mmu:17281"/>
<dbReference type="UCSC" id="uc029xgt.2">
    <property type="organism name" value="mouse"/>
</dbReference>
<dbReference type="AGR" id="MGI:107277"/>
<dbReference type="CTD" id="79443"/>
<dbReference type="MGI" id="MGI:107277">
    <property type="gene designation" value="Fyco1"/>
</dbReference>
<dbReference type="VEuPathDB" id="HostDB:ENSMUSG00000025241"/>
<dbReference type="eggNOG" id="KOG1729">
    <property type="taxonomic scope" value="Eukaryota"/>
</dbReference>
<dbReference type="GeneTree" id="ENSGT00940000154044"/>
<dbReference type="HOGENOM" id="CLU_004445_0_0_1"/>
<dbReference type="InParanoid" id="Q8VDC1"/>
<dbReference type="OMA" id="KERCCSD"/>
<dbReference type="OrthoDB" id="660555at2759"/>
<dbReference type="PhylomeDB" id="Q8VDC1"/>
<dbReference type="TreeFam" id="TF341788"/>
<dbReference type="BioGRID-ORCS" id="17281">
    <property type="hits" value="5 hits in 77 CRISPR screens"/>
</dbReference>
<dbReference type="ChiTaRS" id="Fyco1">
    <property type="organism name" value="mouse"/>
</dbReference>
<dbReference type="PRO" id="PR:Q8VDC1"/>
<dbReference type="Proteomes" id="UP000000589">
    <property type="component" value="Chromosome 9"/>
</dbReference>
<dbReference type="RNAct" id="Q8VDC1">
    <property type="molecule type" value="protein"/>
</dbReference>
<dbReference type="Bgee" id="ENSMUSG00000025241">
    <property type="expression patterns" value="Expressed in soleus muscle and 235 other cell types or tissues"/>
</dbReference>
<dbReference type="ExpressionAtlas" id="Q8VDC1">
    <property type="expression patterns" value="baseline and differential"/>
</dbReference>
<dbReference type="GO" id="GO:0005776">
    <property type="term" value="C:autophagosome"/>
    <property type="evidence" value="ECO:0000250"/>
    <property type="project" value="UniProtKB"/>
</dbReference>
<dbReference type="GO" id="GO:0005794">
    <property type="term" value="C:Golgi apparatus"/>
    <property type="evidence" value="ECO:0007669"/>
    <property type="project" value="Ensembl"/>
</dbReference>
<dbReference type="GO" id="GO:0005770">
    <property type="term" value="C:late endosome"/>
    <property type="evidence" value="ECO:0000250"/>
    <property type="project" value="UniProtKB"/>
</dbReference>
<dbReference type="GO" id="GO:0005764">
    <property type="term" value="C:lysosome"/>
    <property type="evidence" value="ECO:0000250"/>
    <property type="project" value="UniProtKB"/>
</dbReference>
<dbReference type="GO" id="GO:0008270">
    <property type="term" value="F:zinc ion binding"/>
    <property type="evidence" value="ECO:0007669"/>
    <property type="project" value="UniProtKB-KW"/>
</dbReference>
<dbReference type="GO" id="GO:0072383">
    <property type="term" value="P:plus-end-directed vesicle transport along microtubule"/>
    <property type="evidence" value="ECO:0000250"/>
    <property type="project" value="UniProtKB"/>
</dbReference>
<dbReference type="GO" id="GO:1901098">
    <property type="term" value="P:positive regulation of autophagosome maturation"/>
    <property type="evidence" value="ECO:0007669"/>
    <property type="project" value="Ensembl"/>
</dbReference>
<dbReference type="CDD" id="cd15726">
    <property type="entry name" value="FYVE_FYCO1"/>
    <property type="match status" value="1"/>
</dbReference>
<dbReference type="CDD" id="cd17698">
    <property type="entry name" value="RUN_FYCO1"/>
    <property type="match status" value="1"/>
</dbReference>
<dbReference type="FunFam" id="1.20.58.900:FF:000010">
    <property type="entry name" value="FYVE and coiled-coil domain containing 1"/>
    <property type="match status" value="1"/>
</dbReference>
<dbReference type="FunFam" id="2.60.120.680:FF:000004">
    <property type="entry name" value="FYVE and coiled-coil domain containing 1"/>
    <property type="match status" value="1"/>
</dbReference>
<dbReference type="FunFam" id="3.30.40.10:FF:000341">
    <property type="entry name" value="FYVE and coiled-coil domain containing 1"/>
    <property type="match status" value="1"/>
</dbReference>
<dbReference type="Gene3D" id="1.20.58.900">
    <property type="match status" value="1"/>
</dbReference>
<dbReference type="Gene3D" id="2.60.120.680">
    <property type="entry name" value="GOLD domain"/>
    <property type="match status" value="1"/>
</dbReference>
<dbReference type="Gene3D" id="3.30.40.10">
    <property type="entry name" value="Zinc/RING finger domain, C3HC4 (zinc finger)"/>
    <property type="match status" value="1"/>
</dbReference>
<dbReference type="InterPro" id="IPR047337">
    <property type="entry name" value="FYVE_FYCO1"/>
</dbReference>
<dbReference type="InterPro" id="IPR009038">
    <property type="entry name" value="GOLD_dom"/>
</dbReference>
<dbReference type="InterPro" id="IPR036598">
    <property type="entry name" value="GOLD_dom_sf"/>
</dbReference>
<dbReference type="InterPro" id="IPR004012">
    <property type="entry name" value="Run_dom"/>
</dbReference>
<dbReference type="InterPro" id="IPR037213">
    <property type="entry name" value="Run_dom_sf"/>
</dbReference>
<dbReference type="InterPro" id="IPR047336">
    <property type="entry name" value="RUN_FYCO1"/>
</dbReference>
<dbReference type="InterPro" id="IPR000306">
    <property type="entry name" value="Znf_FYVE"/>
</dbReference>
<dbReference type="InterPro" id="IPR017455">
    <property type="entry name" value="Znf_FYVE-rel"/>
</dbReference>
<dbReference type="InterPro" id="IPR011011">
    <property type="entry name" value="Znf_FYVE_PHD"/>
</dbReference>
<dbReference type="InterPro" id="IPR013083">
    <property type="entry name" value="Znf_RING/FYVE/PHD"/>
</dbReference>
<dbReference type="PANTHER" id="PTHR46753">
    <property type="entry name" value="FYVE AND COILED-COIL DOMAIN-CONTAINING PROTEIN 1"/>
    <property type="match status" value="1"/>
</dbReference>
<dbReference type="PANTHER" id="PTHR46753:SF2">
    <property type="entry name" value="FYVE AND COILED-COIL DOMAIN-CONTAINING PROTEIN 1"/>
    <property type="match status" value="1"/>
</dbReference>
<dbReference type="Pfam" id="PF01363">
    <property type="entry name" value="FYVE"/>
    <property type="match status" value="1"/>
</dbReference>
<dbReference type="Pfam" id="PF02759">
    <property type="entry name" value="RUN"/>
    <property type="match status" value="1"/>
</dbReference>
<dbReference type="SMART" id="SM00064">
    <property type="entry name" value="FYVE"/>
    <property type="match status" value="1"/>
</dbReference>
<dbReference type="SUPFAM" id="SSF57903">
    <property type="entry name" value="FYVE/PHD zinc finger"/>
    <property type="match status" value="1"/>
</dbReference>
<dbReference type="SUPFAM" id="SSF140741">
    <property type="entry name" value="RUN domain-like"/>
    <property type="match status" value="1"/>
</dbReference>
<dbReference type="SUPFAM" id="SSF101576">
    <property type="entry name" value="Supernatant protein factor (SPF), C-terminal domain"/>
    <property type="match status" value="1"/>
</dbReference>
<dbReference type="PROSITE" id="PS50866">
    <property type="entry name" value="GOLD"/>
    <property type="match status" value="1"/>
</dbReference>
<dbReference type="PROSITE" id="PS50826">
    <property type="entry name" value="RUN"/>
    <property type="match status" value="1"/>
</dbReference>
<dbReference type="PROSITE" id="PS50178">
    <property type="entry name" value="ZF_FYVE"/>
    <property type="match status" value="1"/>
</dbReference>
<accession>Q8VDC1</accession>
<accession>Q3V385</accession>
<accession>Q7TMT0</accession>
<accession>Q8BJN2</accession>
<feature type="initiator methionine" description="Removed" evidence="2">
    <location>
        <position position="1"/>
    </location>
</feature>
<feature type="chain" id="PRO_0000245838" description="FYVE and coiled-coil domain-containing protein 1">
    <location>
        <begin position="2"/>
        <end position="1437"/>
    </location>
</feature>
<feature type="domain" description="RUN" evidence="6">
    <location>
        <begin position="36"/>
        <end position="169"/>
    </location>
</feature>
<feature type="domain" description="GOLD" evidence="5">
    <location>
        <begin position="1296"/>
        <end position="1425"/>
    </location>
</feature>
<feature type="zinc finger region" description="FYVE-type" evidence="4">
    <location>
        <begin position="1132"/>
        <end position="1190"/>
    </location>
</feature>
<feature type="region of interest" description="Disordered" evidence="7">
    <location>
        <begin position="1191"/>
        <end position="1227"/>
    </location>
</feature>
<feature type="region of interest" description="Disordered" evidence="7">
    <location>
        <begin position="1253"/>
        <end position="1289"/>
    </location>
</feature>
<feature type="coiled-coil region" evidence="3">
    <location>
        <begin position="4"/>
        <end position="30"/>
    </location>
</feature>
<feature type="coiled-coil region" evidence="3">
    <location>
        <begin position="223"/>
        <end position="270"/>
    </location>
</feature>
<feature type="coiled-coil region" evidence="3">
    <location>
        <begin position="305"/>
        <end position="846"/>
    </location>
</feature>
<feature type="coiled-coil region" evidence="3">
    <location>
        <begin position="873"/>
        <end position="1110"/>
    </location>
</feature>
<feature type="compositionally biased region" description="Low complexity" evidence="7">
    <location>
        <begin position="1194"/>
        <end position="1206"/>
    </location>
</feature>
<feature type="compositionally biased region" description="Polar residues" evidence="7">
    <location>
        <begin position="1218"/>
        <end position="1227"/>
    </location>
</feature>
<feature type="compositionally biased region" description="Polar residues" evidence="7">
    <location>
        <begin position="1253"/>
        <end position="1283"/>
    </location>
</feature>
<feature type="binding site" evidence="4">
    <location>
        <position position="1138"/>
    </location>
    <ligand>
        <name>Zn(2+)</name>
        <dbReference type="ChEBI" id="CHEBI:29105"/>
        <label>1</label>
    </ligand>
</feature>
<feature type="binding site" evidence="4">
    <location>
        <position position="1141"/>
    </location>
    <ligand>
        <name>Zn(2+)</name>
        <dbReference type="ChEBI" id="CHEBI:29105"/>
        <label>1</label>
    </ligand>
</feature>
<feature type="binding site" evidence="4">
    <location>
        <position position="1154"/>
    </location>
    <ligand>
        <name>Zn(2+)</name>
        <dbReference type="ChEBI" id="CHEBI:29105"/>
        <label>2</label>
    </ligand>
</feature>
<feature type="binding site" evidence="4">
    <location>
        <position position="1157"/>
    </location>
    <ligand>
        <name>Zn(2+)</name>
        <dbReference type="ChEBI" id="CHEBI:29105"/>
        <label>2</label>
    </ligand>
</feature>
<feature type="binding site" evidence="4">
    <location>
        <position position="1162"/>
    </location>
    <ligand>
        <name>Zn(2+)</name>
        <dbReference type="ChEBI" id="CHEBI:29105"/>
        <label>1</label>
    </ligand>
</feature>
<feature type="binding site" evidence="4">
    <location>
        <position position="1165"/>
    </location>
    <ligand>
        <name>Zn(2+)</name>
        <dbReference type="ChEBI" id="CHEBI:29105"/>
        <label>1</label>
    </ligand>
</feature>
<feature type="binding site" evidence="4">
    <location>
        <position position="1182"/>
    </location>
    <ligand>
        <name>Zn(2+)</name>
        <dbReference type="ChEBI" id="CHEBI:29105"/>
        <label>2</label>
    </ligand>
</feature>
<feature type="binding site" evidence="4">
    <location>
        <position position="1185"/>
    </location>
    <ligand>
        <name>Zn(2+)</name>
        <dbReference type="ChEBI" id="CHEBI:29105"/>
        <label>2</label>
    </ligand>
</feature>
<feature type="modified residue" description="N-acetylalanine" evidence="2">
    <location>
        <position position="2"/>
    </location>
</feature>
<feature type="modified residue" description="Phosphoserine" evidence="2">
    <location>
        <position position="196"/>
    </location>
</feature>
<feature type="modified residue" description="Phosphothreonine" evidence="11 12 13">
    <location>
        <position position="372"/>
    </location>
</feature>
<feature type="modified residue" description="Phosphoserine" evidence="2">
    <location>
        <position position="837"/>
    </location>
</feature>
<feature type="sequence conflict" description="In Ref. 2; AAH53712." evidence="10" ref="2">
    <original>D</original>
    <variation>V</variation>
    <location>
        <position position="19"/>
    </location>
</feature>
<feature type="helix" evidence="14">
    <location>
        <begin position="1244"/>
        <end position="1252"/>
    </location>
</feature>
<name>FYCO1_MOUSE</name>
<reference key="1">
    <citation type="journal article" date="2002" name="Mamm. Genome">
        <title>Comparative human/murine sequence analysis of the common eliminated region 1 from human 3p21.3.</title>
        <authorList>
            <person name="Kiss H."/>
            <person name="Darai E."/>
            <person name="Kiss C."/>
            <person name="Kost-Alimova M."/>
            <person name="Klein G."/>
            <person name="Dumanski J.P."/>
            <person name="Imreh S."/>
        </authorList>
    </citation>
    <scope>NUCLEOTIDE SEQUENCE [MRNA]</scope>
    <scope>TISSUE SPECIFICITY</scope>
    <source>
        <strain>BALB/cJ</strain>
    </source>
</reference>
<reference key="2">
    <citation type="journal article" date="2004" name="Genome Res.">
        <title>The status, quality, and expansion of the NIH full-length cDNA project: the Mammalian Gene Collection (MGC).</title>
        <authorList>
            <consortium name="The MGC Project Team"/>
        </authorList>
    </citation>
    <scope>NUCLEOTIDE SEQUENCE [LARGE SCALE MRNA] OF 1-866</scope>
    <source>
        <strain>C57BL/6NCr</strain>
        <tissue>Hematopoietic stem cell</tissue>
    </source>
</reference>
<reference key="3">
    <citation type="journal article" date="2005" name="Science">
        <title>The transcriptional landscape of the mammalian genome.</title>
        <authorList>
            <person name="Carninci P."/>
            <person name="Kasukawa T."/>
            <person name="Katayama S."/>
            <person name="Gough J."/>
            <person name="Frith M.C."/>
            <person name="Maeda N."/>
            <person name="Oyama R."/>
            <person name="Ravasi T."/>
            <person name="Lenhard B."/>
            <person name="Wells C."/>
            <person name="Kodzius R."/>
            <person name="Shimokawa K."/>
            <person name="Bajic V.B."/>
            <person name="Brenner S.E."/>
            <person name="Batalov S."/>
            <person name="Forrest A.R."/>
            <person name="Zavolan M."/>
            <person name="Davis M.J."/>
            <person name="Wilming L.G."/>
            <person name="Aidinis V."/>
            <person name="Allen J.E."/>
            <person name="Ambesi-Impiombato A."/>
            <person name="Apweiler R."/>
            <person name="Aturaliya R.N."/>
            <person name="Bailey T.L."/>
            <person name="Bansal M."/>
            <person name="Baxter L."/>
            <person name="Beisel K.W."/>
            <person name="Bersano T."/>
            <person name="Bono H."/>
            <person name="Chalk A.M."/>
            <person name="Chiu K.P."/>
            <person name="Choudhary V."/>
            <person name="Christoffels A."/>
            <person name="Clutterbuck D.R."/>
            <person name="Crowe M.L."/>
            <person name="Dalla E."/>
            <person name="Dalrymple B.P."/>
            <person name="de Bono B."/>
            <person name="Della Gatta G."/>
            <person name="di Bernardo D."/>
            <person name="Down T."/>
            <person name="Engstrom P."/>
            <person name="Fagiolini M."/>
            <person name="Faulkner G."/>
            <person name="Fletcher C.F."/>
            <person name="Fukushima T."/>
            <person name="Furuno M."/>
            <person name="Futaki S."/>
            <person name="Gariboldi M."/>
            <person name="Georgii-Hemming P."/>
            <person name="Gingeras T.R."/>
            <person name="Gojobori T."/>
            <person name="Green R.E."/>
            <person name="Gustincich S."/>
            <person name="Harbers M."/>
            <person name="Hayashi Y."/>
            <person name="Hensch T.K."/>
            <person name="Hirokawa N."/>
            <person name="Hill D."/>
            <person name="Huminiecki L."/>
            <person name="Iacono M."/>
            <person name="Ikeo K."/>
            <person name="Iwama A."/>
            <person name="Ishikawa T."/>
            <person name="Jakt M."/>
            <person name="Kanapin A."/>
            <person name="Katoh M."/>
            <person name="Kawasawa Y."/>
            <person name="Kelso J."/>
            <person name="Kitamura H."/>
            <person name="Kitano H."/>
            <person name="Kollias G."/>
            <person name="Krishnan S.P."/>
            <person name="Kruger A."/>
            <person name="Kummerfeld S.K."/>
            <person name="Kurochkin I.V."/>
            <person name="Lareau L.F."/>
            <person name="Lazarevic D."/>
            <person name="Lipovich L."/>
            <person name="Liu J."/>
            <person name="Liuni S."/>
            <person name="McWilliam S."/>
            <person name="Madan Babu M."/>
            <person name="Madera M."/>
            <person name="Marchionni L."/>
            <person name="Matsuda H."/>
            <person name="Matsuzawa S."/>
            <person name="Miki H."/>
            <person name="Mignone F."/>
            <person name="Miyake S."/>
            <person name="Morris K."/>
            <person name="Mottagui-Tabar S."/>
            <person name="Mulder N."/>
            <person name="Nakano N."/>
            <person name="Nakauchi H."/>
            <person name="Ng P."/>
            <person name="Nilsson R."/>
            <person name="Nishiguchi S."/>
            <person name="Nishikawa S."/>
            <person name="Nori F."/>
            <person name="Ohara O."/>
            <person name="Okazaki Y."/>
            <person name="Orlando V."/>
            <person name="Pang K.C."/>
            <person name="Pavan W.J."/>
            <person name="Pavesi G."/>
            <person name="Pesole G."/>
            <person name="Petrovsky N."/>
            <person name="Piazza S."/>
            <person name="Reed J."/>
            <person name="Reid J.F."/>
            <person name="Ring B.Z."/>
            <person name="Ringwald M."/>
            <person name="Rost B."/>
            <person name="Ruan Y."/>
            <person name="Salzberg S.L."/>
            <person name="Sandelin A."/>
            <person name="Schneider C."/>
            <person name="Schoenbach C."/>
            <person name="Sekiguchi K."/>
            <person name="Semple C.A."/>
            <person name="Seno S."/>
            <person name="Sessa L."/>
            <person name="Sheng Y."/>
            <person name="Shibata Y."/>
            <person name="Shimada H."/>
            <person name="Shimada K."/>
            <person name="Silva D."/>
            <person name="Sinclair B."/>
            <person name="Sperling S."/>
            <person name="Stupka E."/>
            <person name="Sugiura K."/>
            <person name="Sultana R."/>
            <person name="Takenaka Y."/>
            <person name="Taki K."/>
            <person name="Tammoja K."/>
            <person name="Tan S.L."/>
            <person name="Tang S."/>
            <person name="Taylor M.S."/>
            <person name="Tegner J."/>
            <person name="Teichmann S.A."/>
            <person name="Ueda H.R."/>
            <person name="van Nimwegen E."/>
            <person name="Verardo R."/>
            <person name="Wei C.L."/>
            <person name="Yagi K."/>
            <person name="Yamanishi H."/>
            <person name="Zabarovsky E."/>
            <person name="Zhu S."/>
            <person name="Zimmer A."/>
            <person name="Hide W."/>
            <person name="Bult C."/>
            <person name="Grimmond S.M."/>
            <person name="Teasdale R.D."/>
            <person name="Liu E.T."/>
            <person name="Brusic V."/>
            <person name="Quackenbush J."/>
            <person name="Wahlestedt C."/>
            <person name="Mattick J.S."/>
            <person name="Hume D.A."/>
            <person name="Kai C."/>
            <person name="Sasaki D."/>
            <person name="Tomaru Y."/>
            <person name="Fukuda S."/>
            <person name="Kanamori-Katayama M."/>
            <person name="Suzuki M."/>
            <person name="Aoki J."/>
            <person name="Arakawa T."/>
            <person name="Iida J."/>
            <person name="Imamura K."/>
            <person name="Itoh M."/>
            <person name="Kato T."/>
            <person name="Kawaji H."/>
            <person name="Kawagashira N."/>
            <person name="Kawashima T."/>
            <person name="Kojima M."/>
            <person name="Kondo S."/>
            <person name="Konno H."/>
            <person name="Nakano K."/>
            <person name="Ninomiya N."/>
            <person name="Nishio T."/>
            <person name="Okada M."/>
            <person name="Plessy C."/>
            <person name="Shibata K."/>
            <person name="Shiraki T."/>
            <person name="Suzuki S."/>
            <person name="Tagami M."/>
            <person name="Waki K."/>
            <person name="Watahiki A."/>
            <person name="Okamura-Oho Y."/>
            <person name="Suzuki H."/>
            <person name="Kawai J."/>
            <person name="Hayashizaki Y."/>
        </authorList>
    </citation>
    <scope>NUCLEOTIDE SEQUENCE [LARGE SCALE MRNA] OF 1-366 AND 827-1437</scope>
    <source>
        <strain>C57BL/6J</strain>
        <tissue>Corpus striatum</tissue>
        <tissue>Retina</tissue>
    </source>
</reference>
<reference key="4">
    <citation type="journal article" date="2007" name="Proc. Natl. Acad. Sci. U.S.A.">
        <title>Large-scale phosphorylation analysis of mouse liver.</title>
        <authorList>
            <person name="Villen J."/>
            <person name="Beausoleil S.A."/>
            <person name="Gerber S.A."/>
            <person name="Gygi S.P."/>
        </authorList>
    </citation>
    <scope>PHOSPHORYLATION [LARGE SCALE ANALYSIS] AT THR-372</scope>
    <scope>IDENTIFICATION BY MASS SPECTROMETRY [LARGE SCALE ANALYSIS]</scope>
    <source>
        <tissue>Liver</tissue>
    </source>
</reference>
<reference key="5">
    <citation type="journal article" date="2009" name="Immunity">
        <title>The phagosomal proteome in interferon-gamma-activated macrophages.</title>
        <authorList>
            <person name="Trost M."/>
            <person name="English L."/>
            <person name="Lemieux S."/>
            <person name="Courcelles M."/>
            <person name="Desjardins M."/>
            <person name="Thibault P."/>
        </authorList>
    </citation>
    <scope>PHOSPHORYLATION [LARGE SCALE ANALYSIS] AT THR-372</scope>
    <scope>IDENTIFICATION BY MASS SPECTROMETRY [LARGE SCALE ANALYSIS]</scope>
</reference>
<reference key="6">
    <citation type="journal article" date="2010" name="Cell">
        <title>A tissue-specific atlas of mouse protein phosphorylation and expression.</title>
        <authorList>
            <person name="Huttlin E.L."/>
            <person name="Jedrychowski M.P."/>
            <person name="Elias J.E."/>
            <person name="Goswami T."/>
            <person name="Rad R."/>
            <person name="Beausoleil S.A."/>
            <person name="Villen J."/>
            <person name="Haas W."/>
            <person name="Sowa M.E."/>
            <person name="Gygi S.P."/>
        </authorList>
    </citation>
    <scope>PHOSPHORYLATION [LARGE SCALE ANALYSIS] AT THR-372</scope>
    <scope>IDENTIFICATION BY MASS SPECTROMETRY [LARGE SCALE ANALYSIS]</scope>
    <source>
        <tissue>Brain</tissue>
        <tissue>Brown adipose tissue</tissue>
        <tissue>Heart</tissue>
        <tissue>Kidney</tissue>
        <tissue>Liver</tissue>
        <tissue>Lung</tissue>
        <tissue>Pancreas</tissue>
        <tissue>Spleen</tissue>
        <tissue>Testis</tissue>
    </source>
</reference>
<reference key="7">
    <citation type="journal article" date="2011" name="Am. J. Hum. Genet.">
        <title>Mutations in FYCO1 cause autosomal-recessive congenital cataracts.</title>
        <authorList>
            <person name="Chen J."/>
            <person name="Ma Z."/>
            <person name="Jiao X."/>
            <person name="Fariss R."/>
            <person name="Kantorow W.L."/>
            <person name="Kantorow M."/>
            <person name="Pras E."/>
            <person name="Frydman M."/>
            <person name="Pras E."/>
            <person name="Riazuddin S."/>
            <person name="Riazuddin S.A."/>
            <person name="Hejtmancik J.F."/>
        </authorList>
    </citation>
    <scope>TISSUE SPECIFICITY</scope>
</reference>
<organism>
    <name type="scientific">Mus musculus</name>
    <name type="common">Mouse</name>
    <dbReference type="NCBI Taxonomy" id="10090"/>
    <lineage>
        <taxon>Eukaryota</taxon>
        <taxon>Metazoa</taxon>
        <taxon>Chordata</taxon>
        <taxon>Craniata</taxon>
        <taxon>Vertebrata</taxon>
        <taxon>Euteleostomi</taxon>
        <taxon>Mammalia</taxon>
        <taxon>Eutheria</taxon>
        <taxon>Euarchontoglires</taxon>
        <taxon>Glires</taxon>
        <taxon>Rodentia</taxon>
        <taxon>Myomorpha</taxon>
        <taxon>Muroidea</taxon>
        <taxon>Muridae</taxon>
        <taxon>Murinae</taxon>
        <taxon>Mus</taxon>
        <taxon>Mus</taxon>
    </lineage>
</organism>
<protein>
    <recommendedName>
        <fullName>FYVE and coiled-coil domain-containing protein 1</fullName>
    </recommendedName>
</protein>
<evidence type="ECO:0000250" key="1"/>
<evidence type="ECO:0000250" key="2">
    <source>
        <dbReference type="UniProtKB" id="Q9BQS8"/>
    </source>
</evidence>
<evidence type="ECO:0000255" key="3"/>
<evidence type="ECO:0000255" key="4">
    <source>
        <dbReference type="PROSITE-ProRule" id="PRU00091"/>
    </source>
</evidence>
<evidence type="ECO:0000255" key="5">
    <source>
        <dbReference type="PROSITE-ProRule" id="PRU00096"/>
    </source>
</evidence>
<evidence type="ECO:0000255" key="6">
    <source>
        <dbReference type="PROSITE-ProRule" id="PRU00178"/>
    </source>
</evidence>
<evidence type="ECO:0000256" key="7">
    <source>
        <dbReference type="SAM" id="MobiDB-lite"/>
    </source>
</evidence>
<evidence type="ECO:0000269" key="8">
    <source>
    </source>
</evidence>
<evidence type="ECO:0000269" key="9">
    <source>
    </source>
</evidence>
<evidence type="ECO:0000305" key="10"/>
<evidence type="ECO:0007744" key="11">
    <source>
    </source>
</evidence>
<evidence type="ECO:0007744" key="12">
    <source>
    </source>
</evidence>
<evidence type="ECO:0007744" key="13">
    <source>
    </source>
</evidence>
<evidence type="ECO:0007829" key="14">
    <source>
        <dbReference type="PDB" id="5WRD"/>
    </source>
</evidence>